<organism>
    <name type="scientific">Oryza sativa subsp. japonica</name>
    <name type="common">Rice</name>
    <dbReference type="NCBI Taxonomy" id="39947"/>
    <lineage>
        <taxon>Eukaryota</taxon>
        <taxon>Viridiplantae</taxon>
        <taxon>Streptophyta</taxon>
        <taxon>Embryophyta</taxon>
        <taxon>Tracheophyta</taxon>
        <taxon>Spermatophyta</taxon>
        <taxon>Magnoliopsida</taxon>
        <taxon>Liliopsida</taxon>
        <taxon>Poales</taxon>
        <taxon>Poaceae</taxon>
        <taxon>BOP clade</taxon>
        <taxon>Oryzoideae</taxon>
        <taxon>Oryzeae</taxon>
        <taxon>Oryzinae</taxon>
        <taxon>Oryza</taxon>
        <taxon>Oryza sativa</taxon>
    </lineage>
</organism>
<protein>
    <recommendedName>
        <fullName evidence="4">COP9 signalosome complex subunit 6</fullName>
        <shortName evidence="4">OsCSN6</shortName>
    </recommendedName>
    <alternativeName>
        <fullName evidence="5">Signalosome subunit 6</fullName>
    </alternativeName>
</protein>
<name>CSN6_ORYSJ</name>
<proteinExistence type="evidence at protein level"/>
<feature type="chain" id="PRO_0000446888" description="COP9 signalosome complex subunit 6">
    <location>
        <begin position="1"/>
        <end position="329"/>
    </location>
</feature>
<feature type="domain" description="MPN" evidence="2">
    <location>
        <begin position="44"/>
        <end position="175"/>
    </location>
</feature>
<reference key="1">
    <citation type="submission" date="2006-03" db="EMBL/GenBank/DDBJ databases">
        <title>Profiling of microarray data for iron deficiency in rice root.</title>
        <authorList>
            <person name="Sun T."/>
            <person name="Yin L."/>
        </authorList>
    </citation>
    <scope>NUCLEOTIDE SEQUENCE [MRNA]</scope>
</reference>
<reference key="2">
    <citation type="journal article" date="2005" name="Nature">
        <title>The map-based sequence of the rice genome.</title>
        <authorList>
            <consortium name="International rice genome sequencing project (IRGSP)"/>
        </authorList>
    </citation>
    <scope>NUCLEOTIDE SEQUENCE [LARGE SCALE GENOMIC DNA]</scope>
    <source>
        <strain>cv. Nipponbare</strain>
    </source>
</reference>
<reference key="3">
    <citation type="journal article" date="2008" name="Nucleic Acids Res.">
        <title>The rice annotation project database (RAP-DB): 2008 update.</title>
        <authorList>
            <consortium name="The rice annotation project (RAP)"/>
        </authorList>
    </citation>
    <scope>GENOME REANNOTATION</scope>
    <source>
        <strain>cv. Nipponbare</strain>
    </source>
</reference>
<reference key="4">
    <citation type="journal article" date="2013" name="Rice">
        <title>Improvement of the Oryza sativa Nipponbare reference genome using next generation sequence and optical map data.</title>
        <authorList>
            <person name="Kawahara Y."/>
            <person name="de la Bastide M."/>
            <person name="Hamilton J.P."/>
            <person name="Kanamori H."/>
            <person name="McCombie W.R."/>
            <person name="Ouyang S."/>
            <person name="Schwartz D.C."/>
            <person name="Tanaka T."/>
            <person name="Wu J."/>
            <person name="Zhou S."/>
            <person name="Childs K.L."/>
            <person name="Davidson R.M."/>
            <person name="Lin H."/>
            <person name="Quesada-Ocampo L."/>
            <person name="Vaillancourt B."/>
            <person name="Sakai H."/>
            <person name="Lee S.S."/>
            <person name="Kim J."/>
            <person name="Numa H."/>
            <person name="Itoh T."/>
            <person name="Buell C.R."/>
            <person name="Matsumoto T."/>
        </authorList>
    </citation>
    <scope>GENOME REANNOTATION</scope>
    <source>
        <strain>cv. Nipponbare</strain>
    </source>
</reference>
<reference key="5">
    <citation type="journal article" date="2005" name="PLoS Biol.">
        <title>The genomes of Oryza sativa: a history of duplications.</title>
        <authorList>
            <person name="Yu J."/>
            <person name="Wang J."/>
            <person name="Lin W."/>
            <person name="Li S."/>
            <person name="Li H."/>
            <person name="Zhou J."/>
            <person name="Ni P."/>
            <person name="Dong W."/>
            <person name="Hu S."/>
            <person name="Zeng C."/>
            <person name="Zhang J."/>
            <person name="Zhang Y."/>
            <person name="Li R."/>
            <person name="Xu Z."/>
            <person name="Li S."/>
            <person name="Li X."/>
            <person name="Zheng H."/>
            <person name="Cong L."/>
            <person name="Lin L."/>
            <person name="Yin J."/>
            <person name="Geng J."/>
            <person name="Li G."/>
            <person name="Shi J."/>
            <person name="Liu J."/>
            <person name="Lv H."/>
            <person name="Li J."/>
            <person name="Wang J."/>
            <person name="Deng Y."/>
            <person name="Ran L."/>
            <person name="Shi X."/>
            <person name="Wang X."/>
            <person name="Wu Q."/>
            <person name="Li C."/>
            <person name="Ren X."/>
            <person name="Wang J."/>
            <person name="Wang X."/>
            <person name="Li D."/>
            <person name="Liu D."/>
            <person name="Zhang X."/>
            <person name="Ji Z."/>
            <person name="Zhao W."/>
            <person name="Sun Y."/>
            <person name="Zhang Z."/>
            <person name="Bao J."/>
            <person name="Han Y."/>
            <person name="Dong L."/>
            <person name="Ji J."/>
            <person name="Chen P."/>
            <person name="Wu S."/>
            <person name="Liu J."/>
            <person name="Xiao Y."/>
            <person name="Bu D."/>
            <person name="Tan J."/>
            <person name="Yang L."/>
            <person name="Ye C."/>
            <person name="Zhang J."/>
            <person name="Xu J."/>
            <person name="Zhou Y."/>
            <person name="Yu Y."/>
            <person name="Zhang B."/>
            <person name="Zhuang S."/>
            <person name="Wei H."/>
            <person name="Liu B."/>
            <person name="Lei M."/>
            <person name="Yu H."/>
            <person name="Li Y."/>
            <person name="Xu H."/>
            <person name="Wei S."/>
            <person name="He X."/>
            <person name="Fang L."/>
            <person name="Zhang Z."/>
            <person name="Zhang Y."/>
            <person name="Huang X."/>
            <person name="Su Z."/>
            <person name="Tong W."/>
            <person name="Li J."/>
            <person name="Tong Z."/>
            <person name="Li S."/>
            <person name="Ye J."/>
            <person name="Wang L."/>
            <person name="Fang L."/>
            <person name="Lei T."/>
            <person name="Chen C.-S."/>
            <person name="Chen H.-C."/>
            <person name="Xu Z."/>
            <person name="Li H."/>
            <person name="Huang H."/>
            <person name="Zhang F."/>
            <person name="Xu H."/>
            <person name="Li N."/>
            <person name="Zhao C."/>
            <person name="Li S."/>
            <person name="Dong L."/>
            <person name="Huang Y."/>
            <person name="Li L."/>
            <person name="Xi Y."/>
            <person name="Qi Q."/>
            <person name="Li W."/>
            <person name="Zhang B."/>
            <person name="Hu W."/>
            <person name="Zhang Y."/>
            <person name="Tian X."/>
            <person name="Jiao Y."/>
            <person name="Liang X."/>
            <person name="Jin J."/>
            <person name="Gao L."/>
            <person name="Zheng W."/>
            <person name="Hao B."/>
            <person name="Liu S.-M."/>
            <person name="Wang W."/>
            <person name="Yuan L."/>
            <person name="Cao M."/>
            <person name="McDermott J."/>
            <person name="Samudrala R."/>
            <person name="Wang J."/>
            <person name="Wong G.K.-S."/>
            <person name="Yang H."/>
        </authorList>
    </citation>
    <scope>NUCLEOTIDE SEQUENCE [LARGE SCALE GENOMIC DNA]</scope>
    <source>
        <strain>cv. Nipponbare</strain>
    </source>
</reference>
<reference key="6">
    <citation type="journal article" date="2003" name="Science">
        <title>Collection, mapping, and annotation of over 28,000 cDNA clones from japonica rice.</title>
        <authorList>
            <consortium name="The rice full-length cDNA consortium"/>
        </authorList>
    </citation>
    <scope>NUCLEOTIDE SEQUENCE [LARGE SCALE MRNA]</scope>
    <source>
        <strain>cv. Nipponbare</strain>
    </source>
</reference>
<reference key="7">
    <citation type="journal article" date="2016" name="Sci. Rep.">
        <title>CSN6, a subunit of the COP9 signalosome, is involved in early response to iron deficiency in Oryza sativa.</title>
        <authorList>
            <person name="Tan S."/>
            <person name="Liu F."/>
            <person name="Pan X.X."/>
            <person name="Zang Y.P."/>
            <person name="Jin F."/>
            <person name="Zu W.X."/>
            <person name="Qi X.T."/>
            <person name="Xiao W."/>
            <person name="Yin L.P."/>
        </authorList>
    </citation>
    <scope>FUNCTION</scope>
    <scope>INDUCTION</scope>
</reference>
<gene>
    <name evidence="4" type="primary">CSN6</name>
    <name evidence="8" type="ordered locus">Os08g0500000</name>
    <name evidence="5" type="ordered locus">LOC_Os08g39070</name>
    <name evidence="7" type="ORF">OJ1118_A06.12</name>
    <name evidence="9" type="ORF">OsJ_27828</name>
</gene>
<accession>Q6ZKM2</accession>
<accession>Q0J4P9</accession>
<accession>Q2A0N7</accession>
<sequence>MSAPSDPAVATHPQAGAAAAASSSSGLTFKLHPLVIVNVSDHHTRVKAQAACSGDGASSAAAGGQPPRVFGCVIGVQRGRTVEIFNSFELVLDPVSGTLDRAFLEKKQELYKKVFPDFYVLGWYSTGSDVRDTDMQIHKALMDINESPVYLLLNPAINLSQKDLPVTIYESELHVIDGSPQLIFVRANYTIETVEAERISVDHVAHLKPSDGGSAATQLAAHLTGIHSAIKMLNSRVRVIHQYLVSMQKGDMPLDNSLLRQVSSLVRRLPAMESEKFQDDFLMEYNDTLLMTYLAMFTNCSSTMNELVEKFNATYERSTARRGGRGAFM</sequence>
<dbReference type="EMBL" id="AM234671">
    <property type="protein sequence ID" value="CAJ81251.1"/>
    <property type="molecule type" value="mRNA"/>
</dbReference>
<dbReference type="EMBL" id="AP003873">
    <property type="protein sequence ID" value="BAD08810.1"/>
    <property type="molecule type" value="Genomic_DNA"/>
</dbReference>
<dbReference type="EMBL" id="AP008214">
    <property type="protein sequence ID" value="BAF24066.2"/>
    <property type="status" value="ALT_INIT"/>
    <property type="molecule type" value="Genomic_DNA"/>
</dbReference>
<dbReference type="EMBL" id="AP014964">
    <property type="protein sequence ID" value="BAT06103.1"/>
    <property type="molecule type" value="Genomic_DNA"/>
</dbReference>
<dbReference type="EMBL" id="CM000145">
    <property type="protein sequence ID" value="EEE68946.1"/>
    <property type="molecule type" value="Genomic_DNA"/>
</dbReference>
<dbReference type="EMBL" id="AK058215">
    <property type="protein sequence ID" value="BAG86632.1"/>
    <property type="molecule type" value="mRNA"/>
</dbReference>
<dbReference type="SMR" id="Q6ZKM2"/>
<dbReference type="FunCoup" id="Q6ZKM2">
    <property type="interactions" value="2379"/>
</dbReference>
<dbReference type="STRING" id="39947.Q6ZKM2"/>
<dbReference type="PaxDb" id="39947-Q6ZKM2"/>
<dbReference type="EnsemblPlants" id="Os08t0500000-01">
    <property type="protein sequence ID" value="Os08t0500000-01"/>
    <property type="gene ID" value="Os08g0500000"/>
</dbReference>
<dbReference type="GeneID" id="4345944"/>
<dbReference type="Gramene" id="Os08t0500000-01">
    <property type="protein sequence ID" value="Os08t0500000-01"/>
    <property type="gene ID" value="Os08g0500000"/>
</dbReference>
<dbReference type="KEGG" id="dosa:Os08g0500000"/>
<dbReference type="KEGG" id="osa:4345944"/>
<dbReference type="eggNOG" id="KOG3050">
    <property type="taxonomic scope" value="Eukaryota"/>
</dbReference>
<dbReference type="HOGENOM" id="CLU_027018_1_2_1"/>
<dbReference type="InParanoid" id="Q6ZKM2"/>
<dbReference type="OMA" id="LVGWWST"/>
<dbReference type="OrthoDB" id="1378at2759"/>
<dbReference type="Proteomes" id="UP000000763">
    <property type="component" value="Chromosome 8"/>
</dbReference>
<dbReference type="Proteomes" id="UP000007752">
    <property type="component" value="Chromosome 8"/>
</dbReference>
<dbReference type="Proteomes" id="UP000059680">
    <property type="component" value="Chromosome 8"/>
</dbReference>
<dbReference type="GO" id="GO:0008180">
    <property type="term" value="C:COP9 signalosome"/>
    <property type="evidence" value="ECO:0000318"/>
    <property type="project" value="GO_Central"/>
</dbReference>
<dbReference type="GO" id="GO:0008237">
    <property type="term" value="F:metallopeptidase activity"/>
    <property type="evidence" value="ECO:0007669"/>
    <property type="project" value="InterPro"/>
</dbReference>
<dbReference type="GO" id="GO:0000338">
    <property type="term" value="P:protein deneddylation"/>
    <property type="evidence" value="ECO:0007669"/>
    <property type="project" value="InterPro"/>
</dbReference>
<dbReference type="GO" id="GO:1990641">
    <property type="term" value="P:response to iron ion starvation"/>
    <property type="evidence" value="ECO:0000314"/>
    <property type="project" value="UniProtKB"/>
</dbReference>
<dbReference type="CDD" id="cd08063">
    <property type="entry name" value="MPN_CSN6"/>
    <property type="match status" value="1"/>
</dbReference>
<dbReference type="FunFam" id="3.40.140.10:FF:000037">
    <property type="entry name" value="COP9 signalosome subunit 6"/>
    <property type="match status" value="1"/>
</dbReference>
<dbReference type="Gene3D" id="3.40.140.10">
    <property type="entry name" value="Cytidine Deaminase, domain 2"/>
    <property type="match status" value="1"/>
</dbReference>
<dbReference type="InterPro" id="IPR024969">
    <property type="entry name" value="EIF3F/CSN6-like_C"/>
</dbReference>
<dbReference type="InterPro" id="IPR000555">
    <property type="entry name" value="JAMM/MPN+_dom"/>
</dbReference>
<dbReference type="InterPro" id="IPR037518">
    <property type="entry name" value="MPN"/>
</dbReference>
<dbReference type="InterPro" id="IPR033859">
    <property type="entry name" value="MPN_CSN6"/>
</dbReference>
<dbReference type="PANTHER" id="PTHR10540:SF8">
    <property type="entry name" value="COP9 SIGNALOSOME COMPLEX SUBUNIT 6"/>
    <property type="match status" value="1"/>
</dbReference>
<dbReference type="PANTHER" id="PTHR10540">
    <property type="entry name" value="EUKARYOTIC TRANSLATION INITIATION FACTOR 3 SUBUNIT F-RELATED"/>
    <property type="match status" value="1"/>
</dbReference>
<dbReference type="Pfam" id="PF01398">
    <property type="entry name" value="JAB"/>
    <property type="match status" value="1"/>
</dbReference>
<dbReference type="Pfam" id="PF13012">
    <property type="entry name" value="MitMem_reg"/>
    <property type="match status" value="1"/>
</dbReference>
<dbReference type="SMART" id="SM00232">
    <property type="entry name" value="JAB_MPN"/>
    <property type="match status" value="1"/>
</dbReference>
<dbReference type="PROSITE" id="PS50249">
    <property type="entry name" value="MPN"/>
    <property type="match status" value="1"/>
</dbReference>
<evidence type="ECO:0000250" key="1">
    <source>
        <dbReference type="UniProtKB" id="Q8W206"/>
    </source>
</evidence>
<evidence type="ECO:0000255" key="2">
    <source>
        <dbReference type="PROSITE-ProRule" id="PRU01182"/>
    </source>
</evidence>
<evidence type="ECO:0000269" key="3">
    <source>
    </source>
</evidence>
<evidence type="ECO:0000303" key="4">
    <source>
    </source>
</evidence>
<evidence type="ECO:0000305" key="5"/>
<evidence type="ECO:0000305" key="6">
    <source>
    </source>
</evidence>
<evidence type="ECO:0000312" key="7">
    <source>
        <dbReference type="EMBL" id="BAD08810.1"/>
    </source>
</evidence>
<evidence type="ECO:0000312" key="8">
    <source>
        <dbReference type="EMBL" id="BAT06103.1"/>
    </source>
</evidence>
<evidence type="ECO:0000312" key="9">
    <source>
        <dbReference type="EMBL" id="EEE68946.1"/>
    </source>
</evidence>
<keyword id="KW-1185">Reference proteome</keyword>
<comment type="function">
    <text evidence="3 6">Component of the COP9 signalosome complex (CSN), a complex involved in various cellular and developmental processes such as photomorphogenesis and response to hormones (Probable). The CSN complex is an essential regulator of the ubiquitin (Ubl) conjugation pathway by mediating the deneddylation of the cullin subunits of SCF-type E3 ligase complexes, leading to decrease the Ubl ligase activity of SCF (Probable). Involved in early response to iron deficiency (PubMed:27137867).</text>
</comment>
<comment type="subunit">
    <text evidence="1">Component of the CSN complex, probably composed of CSN1, CSN2, CSN3, CSN4, CSN5, CSN6, CSN7 and CSN8.</text>
</comment>
<comment type="induction">
    <text evidence="3">Down-regulated during the early stage of iron deficiency (at protein level).</text>
</comment>
<comment type="similarity">
    <text evidence="5">Belongs to the peptidase M67A family. CSN6 subfamily.</text>
</comment>
<comment type="sequence caution" evidence="5">
    <conflict type="erroneous initiation">
        <sequence resource="EMBL-CDS" id="BAF24066"/>
    </conflict>
    <text>Extended N-terminus.</text>
</comment>